<feature type="chain" id="PRO_0000122791" description="Protein RecA">
    <location>
        <begin position="1"/>
        <end position="355"/>
    </location>
</feature>
<feature type="region of interest" description="Disordered" evidence="2">
    <location>
        <begin position="336"/>
        <end position="355"/>
    </location>
</feature>
<feature type="compositionally biased region" description="Acidic residues" evidence="2">
    <location>
        <begin position="341"/>
        <end position="355"/>
    </location>
</feature>
<feature type="binding site" evidence="1">
    <location>
        <begin position="67"/>
        <end position="74"/>
    </location>
    <ligand>
        <name>ATP</name>
        <dbReference type="ChEBI" id="CHEBI:30616"/>
    </ligand>
</feature>
<organism>
    <name type="scientific">Photorhabdus laumondii subsp. laumondii (strain DSM 15139 / CIP 105565 / TT01)</name>
    <name type="common">Photorhabdus luminescens subsp. laumondii</name>
    <dbReference type="NCBI Taxonomy" id="243265"/>
    <lineage>
        <taxon>Bacteria</taxon>
        <taxon>Pseudomonadati</taxon>
        <taxon>Pseudomonadota</taxon>
        <taxon>Gammaproteobacteria</taxon>
        <taxon>Enterobacterales</taxon>
        <taxon>Morganellaceae</taxon>
        <taxon>Photorhabdus</taxon>
    </lineage>
</organism>
<name>RECA_PHOLL</name>
<evidence type="ECO:0000255" key="1">
    <source>
        <dbReference type="HAMAP-Rule" id="MF_00268"/>
    </source>
</evidence>
<evidence type="ECO:0000256" key="2">
    <source>
        <dbReference type="SAM" id="MobiDB-lite"/>
    </source>
</evidence>
<accession>Q7N7A6</accession>
<gene>
    <name evidence="1" type="primary">recA</name>
    <name type="ordered locus">plu1249</name>
</gene>
<proteinExistence type="inferred from homology"/>
<protein>
    <recommendedName>
        <fullName evidence="1">Protein RecA</fullName>
    </recommendedName>
    <alternativeName>
        <fullName evidence="1">Recombinase A</fullName>
    </alternativeName>
</protein>
<keyword id="KW-0067">ATP-binding</keyword>
<keyword id="KW-0963">Cytoplasm</keyword>
<keyword id="KW-0227">DNA damage</keyword>
<keyword id="KW-0233">DNA recombination</keyword>
<keyword id="KW-0234">DNA repair</keyword>
<keyword id="KW-0238">DNA-binding</keyword>
<keyword id="KW-0547">Nucleotide-binding</keyword>
<keyword id="KW-1185">Reference proteome</keyword>
<keyword id="KW-0742">SOS response</keyword>
<sequence length="355" mass="38381">MAIDENKQKALAAALGQIEKQFGKGSIMRLGEDRSMDVETISTGSLSLDIALGAGGLPMGRIVEIYGPESSGKTTLTLQVIAAAQREGKTCAFIDAEHALDPIYAKKLGVDIDNLLCSQPDTGEQALEICDALTRSGAVDVIIVDSVAALTPKAEIEGEIGDSHMGLAARMMSQAMRKLAGNLKSSNTLLIFINQIRMKIGVMFGNPETTTGGNALKFYASVRLDIRRIGSVKNGEEVVGSETRVKVVKNKVAAPFKQAEFQIMYGEGINTYGELIDLGVKHKLVEKAGAWYSYNGDKIGQGKANATIYLKEHPEVATELDKKLREMLLHNAGEFNSAASDYEDNENEEMNNEEF</sequence>
<dbReference type="EMBL" id="BX571863">
    <property type="protein sequence ID" value="CAE13543.1"/>
    <property type="molecule type" value="Genomic_DNA"/>
</dbReference>
<dbReference type="RefSeq" id="WP_011145574.1">
    <property type="nucleotide sequence ID" value="NC_005126.1"/>
</dbReference>
<dbReference type="SMR" id="Q7N7A6"/>
<dbReference type="STRING" id="243265.plu1249"/>
<dbReference type="GeneID" id="48847519"/>
<dbReference type="KEGG" id="plu:plu1249"/>
<dbReference type="eggNOG" id="COG0468">
    <property type="taxonomic scope" value="Bacteria"/>
</dbReference>
<dbReference type="HOGENOM" id="CLU_040469_3_2_6"/>
<dbReference type="OrthoDB" id="9776733at2"/>
<dbReference type="Proteomes" id="UP000002514">
    <property type="component" value="Chromosome"/>
</dbReference>
<dbReference type="GO" id="GO:0005829">
    <property type="term" value="C:cytosol"/>
    <property type="evidence" value="ECO:0007669"/>
    <property type="project" value="TreeGrafter"/>
</dbReference>
<dbReference type="GO" id="GO:0005524">
    <property type="term" value="F:ATP binding"/>
    <property type="evidence" value="ECO:0007669"/>
    <property type="project" value="UniProtKB-UniRule"/>
</dbReference>
<dbReference type="GO" id="GO:0016887">
    <property type="term" value="F:ATP hydrolysis activity"/>
    <property type="evidence" value="ECO:0007669"/>
    <property type="project" value="InterPro"/>
</dbReference>
<dbReference type="GO" id="GO:0140664">
    <property type="term" value="F:ATP-dependent DNA damage sensor activity"/>
    <property type="evidence" value="ECO:0007669"/>
    <property type="project" value="InterPro"/>
</dbReference>
<dbReference type="GO" id="GO:0003684">
    <property type="term" value="F:damaged DNA binding"/>
    <property type="evidence" value="ECO:0007669"/>
    <property type="project" value="UniProtKB-UniRule"/>
</dbReference>
<dbReference type="GO" id="GO:0003697">
    <property type="term" value="F:single-stranded DNA binding"/>
    <property type="evidence" value="ECO:0007669"/>
    <property type="project" value="UniProtKB-UniRule"/>
</dbReference>
<dbReference type="GO" id="GO:0006310">
    <property type="term" value="P:DNA recombination"/>
    <property type="evidence" value="ECO:0007669"/>
    <property type="project" value="UniProtKB-UniRule"/>
</dbReference>
<dbReference type="GO" id="GO:0006281">
    <property type="term" value="P:DNA repair"/>
    <property type="evidence" value="ECO:0007669"/>
    <property type="project" value="UniProtKB-UniRule"/>
</dbReference>
<dbReference type="GO" id="GO:0009432">
    <property type="term" value="P:SOS response"/>
    <property type="evidence" value="ECO:0007669"/>
    <property type="project" value="UniProtKB-UniRule"/>
</dbReference>
<dbReference type="CDD" id="cd00983">
    <property type="entry name" value="RecA"/>
    <property type="match status" value="1"/>
</dbReference>
<dbReference type="FunFam" id="3.40.50.300:FF:000087">
    <property type="entry name" value="Recombinase RecA"/>
    <property type="match status" value="1"/>
</dbReference>
<dbReference type="Gene3D" id="3.40.50.300">
    <property type="entry name" value="P-loop containing nucleotide triphosphate hydrolases"/>
    <property type="match status" value="1"/>
</dbReference>
<dbReference type="HAMAP" id="MF_00268">
    <property type="entry name" value="RecA"/>
    <property type="match status" value="1"/>
</dbReference>
<dbReference type="InterPro" id="IPR003593">
    <property type="entry name" value="AAA+_ATPase"/>
</dbReference>
<dbReference type="InterPro" id="IPR013765">
    <property type="entry name" value="DNA_recomb/repair_RecA"/>
</dbReference>
<dbReference type="InterPro" id="IPR020584">
    <property type="entry name" value="DNA_recomb/repair_RecA_CS"/>
</dbReference>
<dbReference type="InterPro" id="IPR027417">
    <property type="entry name" value="P-loop_NTPase"/>
</dbReference>
<dbReference type="InterPro" id="IPR049261">
    <property type="entry name" value="RecA-like_C"/>
</dbReference>
<dbReference type="InterPro" id="IPR049428">
    <property type="entry name" value="RecA-like_N"/>
</dbReference>
<dbReference type="InterPro" id="IPR020588">
    <property type="entry name" value="RecA_ATP-bd"/>
</dbReference>
<dbReference type="InterPro" id="IPR023400">
    <property type="entry name" value="RecA_C_sf"/>
</dbReference>
<dbReference type="InterPro" id="IPR020587">
    <property type="entry name" value="RecA_monomer-monomer_interface"/>
</dbReference>
<dbReference type="NCBIfam" id="TIGR02012">
    <property type="entry name" value="tigrfam_recA"/>
    <property type="match status" value="1"/>
</dbReference>
<dbReference type="PANTHER" id="PTHR45900:SF1">
    <property type="entry name" value="MITOCHONDRIAL DNA REPAIR PROTEIN RECA HOMOLOG-RELATED"/>
    <property type="match status" value="1"/>
</dbReference>
<dbReference type="PANTHER" id="PTHR45900">
    <property type="entry name" value="RECA"/>
    <property type="match status" value="1"/>
</dbReference>
<dbReference type="Pfam" id="PF00154">
    <property type="entry name" value="RecA"/>
    <property type="match status" value="1"/>
</dbReference>
<dbReference type="Pfam" id="PF21096">
    <property type="entry name" value="RecA_C"/>
    <property type="match status" value="1"/>
</dbReference>
<dbReference type="PRINTS" id="PR00142">
    <property type="entry name" value="RECA"/>
</dbReference>
<dbReference type="SMART" id="SM00382">
    <property type="entry name" value="AAA"/>
    <property type="match status" value="1"/>
</dbReference>
<dbReference type="SUPFAM" id="SSF52540">
    <property type="entry name" value="P-loop containing nucleoside triphosphate hydrolases"/>
    <property type="match status" value="1"/>
</dbReference>
<dbReference type="SUPFAM" id="SSF54752">
    <property type="entry name" value="RecA protein, C-terminal domain"/>
    <property type="match status" value="1"/>
</dbReference>
<dbReference type="PROSITE" id="PS00321">
    <property type="entry name" value="RECA_1"/>
    <property type="match status" value="1"/>
</dbReference>
<dbReference type="PROSITE" id="PS50162">
    <property type="entry name" value="RECA_2"/>
    <property type="match status" value="1"/>
</dbReference>
<dbReference type="PROSITE" id="PS50163">
    <property type="entry name" value="RECA_3"/>
    <property type="match status" value="1"/>
</dbReference>
<comment type="function">
    <text evidence="1">Can catalyze the hydrolysis of ATP in the presence of single-stranded DNA, the ATP-dependent uptake of single-stranded DNA by duplex DNA, and the ATP-dependent hybridization of homologous single-stranded DNAs. It interacts with LexA causing its activation and leading to its autocatalytic cleavage.</text>
</comment>
<comment type="subcellular location">
    <subcellularLocation>
        <location evidence="1">Cytoplasm</location>
    </subcellularLocation>
</comment>
<comment type="similarity">
    <text evidence="1">Belongs to the RecA family.</text>
</comment>
<reference key="1">
    <citation type="journal article" date="2003" name="Nat. Biotechnol.">
        <title>The genome sequence of the entomopathogenic bacterium Photorhabdus luminescens.</title>
        <authorList>
            <person name="Duchaud E."/>
            <person name="Rusniok C."/>
            <person name="Frangeul L."/>
            <person name="Buchrieser C."/>
            <person name="Givaudan A."/>
            <person name="Taourit S."/>
            <person name="Bocs S."/>
            <person name="Boursaux-Eude C."/>
            <person name="Chandler M."/>
            <person name="Charles J.-F."/>
            <person name="Dassa E."/>
            <person name="Derose R."/>
            <person name="Derzelle S."/>
            <person name="Freyssinet G."/>
            <person name="Gaudriault S."/>
            <person name="Medigue C."/>
            <person name="Lanois A."/>
            <person name="Powell K."/>
            <person name="Siguier P."/>
            <person name="Vincent R."/>
            <person name="Wingate V."/>
            <person name="Zouine M."/>
            <person name="Glaser P."/>
            <person name="Boemare N."/>
            <person name="Danchin A."/>
            <person name="Kunst F."/>
        </authorList>
    </citation>
    <scope>NUCLEOTIDE SEQUENCE [LARGE SCALE GENOMIC DNA]</scope>
    <source>
        <strain>DSM 15139 / CIP 105565 / TT01</strain>
    </source>
</reference>